<keyword id="KW-0067">ATP-binding</keyword>
<keyword id="KW-0963">Cytoplasm</keyword>
<keyword id="KW-0418">Kinase</keyword>
<keyword id="KW-0545">Nucleotide biosynthesis</keyword>
<keyword id="KW-0547">Nucleotide-binding</keyword>
<keyword id="KW-1185">Reference proteome</keyword>
<keyword id="KW-0808">Transferase</keyword>
<organism>
    <name type="scientific">Shewanella baltica (strain OS155 / ATCC BAA-1091)</name>
    <dbReference type="NCBI Taxonomy" id="325240"/>
    <lineage>
        <taxon>Bacteria</taxon>
        <taxon>Pseudomonadati</taxon>
        <taxon>Pseudomonadota</taxon>
        <taxon>Gammaproteobacteria</taxon>
        <taxon>Alteromonadales</taxon>
        <taxon>Shewanellaceae</taxon>
        <taxon>Shewanella</taxon>
    </lineage>
</organism>
<proteinExistence type="inferred from homology"/>
<comment type="function">
    <text evidence="1">Catalyzes the reversible transfer of the terminal phosphate group between ATP and AMP. Plays an important role in cellular energy homeostasis and in adenine nucleotide metabolism.</text>
</comment>
<comment type="catalytic activity">
    <reaction evidence="1">
        <text>AMP + ATP = 2 ADP</text>
        <dbReference type="Rhea" id="RHEA:12973"/>
        <dbReference type="ChEBI" id="CHEBI:30616"/>
        <dbReference type="ChEBI" id="CHEBI:456215"/>
        <dbReference type="ChEBI" id="CHEBI:456216"/>
        <dbReference type="EC" id="2.7.4.3"/>
    </reaction>
</comment>
<comment type="pathway">
    <text evidence="1">Purine metabolism; AMP biosynthesis via salvage pathway; AMP from ADP: step 1/1.</text>
</comment>
<comment type="subunit">
    <text evidence="1">Monomer.</text>
</comment>
<comment type="subcellular location">
    <subcellularLocation>
        <location evidence="1">Cytoplasm</location>
    </subcellularLocation>
</comment>
<comment type="domain">
    <text evidence="1">Consists of three domains, a large central CORE domain and two small peripheral domains, NMPbind and LID, which undergo movements during catalysis. The LID domain closes over the site of phosphoryl transfer upon ATP binding. Assembling and dissambling the active center during each catalytic cycle provides an effective means to prevent ATP hydrolysis.</text>
</comment>
<comment type="similarity">
    <text evidence="1">Belongs to the adenylate kinase family.</text>
</comment>
<accession>A3D5M6</accession>
<protein>
    <recommendedName>
        <fullName evidence="1">Adenylate kinase</fullName>
        <shortName evidence="1">AK</shortName>
        <ecNumber evidence="1">2.7.4.3</ecNumber>
    </recommendedName>
    <alternativeName>
        <fullName evidence="1">ATP-AMP transphosphorylase</fullName>
    </alternativeName>
    <alternativeName>
        <fullName evidence="1">ATP:AMP phosphotransferase</fullName>
    </alternativeName>
    <alternativeName>
        <fullName evidence="1">Adenylate monophosphate kinase</fullName>
    </alternativeName>
</protein>
<sequence length="214" mass="23156">MRIILLGAPGAGKGTQAQFIMEQYGIPQISTGDMLRAAVKAGTPLGLEAKKVMDAGQLVSDDLIIGLVKERIAQEDCVKGFLLDGFPRTIPQADAMAANGISIDHVIEIDVPDEEIVKRMSGRRVHPGSGRVYHVVFNPPKVEGKDDVTGEDLAIRPDDEESTVRKRLAIYHEQTKPLVEYYGKVAAAGQTQYNKFDGTQSVAAVSEQLASVLK</sequence>
<evidence type="ECO:0000255" key="1">
    <source>
        <dbReference type="HAMAP-Rule" id="MF_00235"/>
    </source>
</evidence>
<feature type="chain" id="PRO_1000058894" description="Adenylate kinase">
    <location>
        <begin position="1"/>
        <end position="214"/>
    </location>
</feature>
<feature type="region of interest" description="NMP" evidence="1">
    <location>
        <begin position="30"/>
        <end position="59"/>
    </location>
</feature>
<feature type="region of interest" description="LID" evidence="1">
    <location>
        <begin position="122"/>
        <end position="159"/>
    </location>
</feature>
<feature type="binding site" evidence="1">
    <location>
        <begin position="10"/>
        <end position="15"/>
    </location>
    <ligand>
        <name>ATP</name>
        <dbReference type="ChEBI" id="CHEBI:30616"/>
    </ligand>
</feature>
<feature type="binding site" evidence="1">
    <location>
        <position position="31"/>
    </location>
    <ligand>
        <name>AMP</name>
        <dbReference type="ChEBI" id="CHEBI:456215"/>
    </ligand>
</feature>
<feature type="binding site" evidence="1">
    <location>
        <position position="36"/>
    </location>
    <ligand>
        <name>AMP</name>
        <dbReference type="ChEBI" id="CHEBI:456215"/>
    </ligand>
</feature>
<feature type="binding site" evidence="1">
    <location>
        <begin position="57"/>
        <end position="59"/>
    </location>
    <ligand>
        <name>AMP</name>
        <dbReference type="ChEBI" id="CHEBI:456215"/>
    </ligand>
</feature>
<feature type="binding site" evidence="1">
    <location>
        <begin position="85"/>
        <end position="88"/>
    </location>
    <ligand>
        <name>AMP</name>
        <dbReference type="ChEBI" id="CHEBI:456215"/>
    </ligand>
</feature>
<feature type="binding site" evidence="1">
    <location>
        <position position="92"/>
    </location>
    <ligand>
        <name>AMP</name>
        <dbReference type="ChEBI" id="CHEBI:456215"/>
    </ligand>
</feature>
<feature type="binding site" evidence="1">
    <location>
        <position position="123"/>
    </location>
    <ligand>
        <name>ATP</name>
        <dbReference type="ChEBI" id="CHEBI:30616"/>
    </ligand>
</feature>
<feature type="binding site" evidence="1">
    <location>
        <begin position="132"/>
        <end position="133"/>
    </location>
    <ligand>
        <name>ATP</name>
        <dbReference type="ChEBI" id="CHEBI:30616"/>
    </ligand>
</feature>
<feature type="binding site" evidence="1">
    <location>
        <position position="156"/>
    </location>
    <ligand>
        <name>AMP</name>
        <dbReference type="ChEBI" id="CHEBI:456215"/>
    </ligand>
</feature>
<feature type="binding site" evidence="1">
    <location>
        <position position="167"/>
    </location>
    <ligand>
        <name>AMP</name>
        <dbReference type="ChEBI" id="CHEBI:456215"/>
    </ligand>
</feature>
<feature type="binding site" evidence="1">
    <location>
        <position position="200"/>
    </location>
    <ligand>
        <name>ATP</name>
        <dbReference type="ChEBI" id="CHEBI:30616"/>
    </ligand>
</feature>
<dbReference type="EC" id="2.7.4.3" evidence="1"/>
<dbReference type="EMBL" id="CP000563">
    <property type="protein sequence ID" value="ABN62039.1"/>
    <property type="molecule type" value="Genomic_DNA"/>
</dbReference>
<dbReference type="RefSeq" id="WP_006082054.1">
    <property type="nucleotide sequence ID" value="NC_009052.1"/>
</dbReference>
<dbReference type="SMR" id="A3D5M6"/>
<dbReference type="STRING" id="325240.Sbal_2546"/>
<dbReference type="GeneID" id="11772751"/>
<dbReference type="KEGG" id="sbl:Sbal_2546"/>
<dbReference type="HOGENOM" id="CLU_032354_1_2_6"/>
<dbReference type="OrthoDB" id="9805030at2"/>
<dbReference type="UniPathway" id="UPA00588">
    <property type="reaction ID" value="UER00649"/>
</dbReference>
<dbReference type="Proteomes" id="UP000001557">
    <property type="component" value="Chromosome"/>
</dbReference>
<dbReference type="GO" id="GO:0005737">
    <property type="term" value="C:cytoplasm"/>
    <property type="evidence" value="ECO:0007669"/>
    <property type="project" value="UniProtKB-SubCell"/>
</dbReference>
<dbReference type="GO" id="GO:0004017">
    <property type="term" value="F:adenylate kinase activity"/>
    <property type="evidence" value="ECO:0007669"/>
    <property type="project" value="UniProtKB-UniRule"/>
</dbReference>
<dbReference type="GO" id="GO:0005524">
    <property type="term" value="F:ATP binding"/>
    <property type="evidence" value="ECO:0007669"/>
    <property type="project" value="UniProtKB-UniRule"/>
</dbReference>
<dbReference type="GO" id="GO:0044209">
    <property type="term" value="P:AMP salvage"/>
    <property type="evidence" value="ECO:0007669"/>
    <property type="project" value="UniProtKB-UniRule"/>
</dbReference>
<dbReference type="CDD" id="cd01428">
    <property type="entry name" value="ADK"/>
    <property type="match status" value="1"/>
</dbReference>
<dbReference type="FunFam" id="3.40.50.300:FF:000106">
    <property type="entry name" value="Adenylate kinase mitochondrial"/>
    <property type="match status" value="1"/>
</dbReference>
<dbReference type="Gene3D" id="3.40.50.300">
    <property type="entry name" value="P-loop containing nucleotide triphosphate hydrolases"/>
    <property type="match status" value="1"/>
</dbReference>
<dbReference type="HAMAP" id="MF_00235">
    <property type="entry name" value="Adenylate_kinase_Adk"/>
    <property type="match status" value="1"/>
</dbReference>
<dbReference type="InterPro" id="IPR006259">
    <property type="entry name" value="Adenyl_kin_sub"/>
</dbReference>
<dbReference type="InterPro" id="IPR000850">
    <property type="entry name" value="Adenylat/UMP-CMP_kin"/>
</dbReference>
<dbReference type="InterPro" id="IPR033690">
    <property type="entry name" value="Adenylat_kinase_CS"/>
</dbReference>
<dbReference type="InterPro" id="IPR007862">
    <property type="entry name" value="Adenylate_kinase_lid-dom"/>
</dbReference>
<dbReference type="InterPro" id="IPR027417">
    <property type="entry name" value="P-loop_NTPase"/>
</dbReference>
<dbReference type="NCBIfam" id="TIGR01351">
    <property type="entry name" value="adk"/>
    <property type="match status" value="1"/>
</dbReference>
<dbReference type="NCBIfam" id="NF001379">
    <property type="entry name" value="PRK00279.1-1"/>
    <property type="match status" value="1"/>
</dbReference>
<dbReference type="NCBIfam" id="NF001380">
    <property type="entry name" value="PRK00279.1-2"/>
    <property type="match status" value="1"/>
</dbReference>
<dbReference type="NCBIfam" id="NF001381">
    <property type="entry name" value="PRK00279.1-3"/>
    <property type="match status" value="1"/>
</dbReference>
<dbReference type="NCBIfam" id="NF011100">
    <property type="entry name" value="PRK14527.1"/>
    <property type="match status" value="1"/>
</dbReference>
<dbReference type="PANTHER" id="PTHR23359">
    <property type="entry name" value="NUCLEOTIDE KINASE"/>
    <property type="match status" value="1"/>
</dbReference>
<dbReference type="Pfam" id="PF00406">
    <property type="entry name" value="ADK"/>
    <property type="match status" value="1"/>
</dbReference>
<dbReference type="Pfam" id="PF05191">
    <property type="entry name" value="ADK_lid"/>
    <property type="match status" value="1"/>
</dbReference>
<dbReference type="PRINTS" id="PR00094">
    <property type="entry name" value="ADENYLTKNASE"/>
</dbReference>
<dbReference type="SUPFAM" id="SSF52540">
    <property type="entry name" value="P-loop containing nucleoside triphosphate hydrolases"/>
    <property type="match status" value="1"/>
</dbReference>
<dbReference type="PROSITE" id="PS00113">
    <property type="entry name" value="ADENYLATE_KINASE"/>
    <property type="match status" value="1"/>
</dbReference>
<gene>
    <name evidence="1" type="primary">adk</name>
    <name type="ordered locus">Sbal_2546</name>
</gene>
<reference key="1">
    <citation type="submission" date="2007-02" db="EMBL/GenBank/DDBJ databases">
        <title>Complete sequence of chromosome of Shewanella baltica OS155.</title>
        <authorList>
            <consortium name="US DOE Joint Genome Institute"/>
            <person name="Copeland A."/>
            <person name="Lucas S."/>
            <person name="Lapidus A."/>
            <person name="Barry K."/>
            <person name="Detter J.C."/>
            <person name="Glavina del Rio T."/>
            <person name="Hammon N."/>
            <person name="Israni S."/>
            <person name="Dalin E."/>
            <person name="Tice H."/>
            <person name="Pitluck S."/>
            <person name="Sims D.R."/>
            <person name="Brettin T."/>
            <person name="Bruce D."/>
            <person name="Han C."/>
            <person name="Tapia R."/>
            <person name="Brainard J."/>
            <person name="Schmutz J."/>
            <person name="Larimer F."/>
            <person name="Land M."/>
            <person name="Hauser L."/>
            <person name="Kyrpides N."/>
            <person name="Mikhailova N."/>
            <person name="Brettar I."/>
            <person name="Klappenbach J."/>
            <person name="Konstantinidis K."/>
            <person name="Rodrigues J."/>
            <person name="Tiedje J."/>
            <person name="Richardson P."/>
        </authorList>
    </citation>
    <scope>NUCLEOTIDE SEQUENCE [LARGE SCALE GENOMIC DNA]</scope>
    <source>
        <strain>OS155 / ATCC BAA-1091</strain>
    </source>
</reference>
<name>KAD_SHEB5</name>